<sequence>MKMHMKHLDLYSQAIKTLRWTQPMRALSTVNTSSGVQGNLSPAAPAPEPDKLYSKLEIELRGIDPAVLKSYTWFATTAAEHLGIEKGKCWSPRKAHHERMTLLKSVHIYKKHRVQYEVRTHFRYMNFHKLTGSTLDTFLEYIERNLPEGVALQASRTELQEIPEHLRQPPEQV</sequence>
<protein>
    <recommendedName>
        <fullName evidence="3">Small ribosomal subunit protein uS10m</fullName>
    </recommendedName>
    <alternativeName>
        <fullName>28S ribosomal protein S10, mitochondrial</fullName>
        <shortName>MRP-S10</shortName>
        <shortName>S10mt</shortName>
    </alternativeName>
</protein>
<reference key="1">
    <citation type="journal article" date="2000" name="Science">
        <title>The genome sequence of Drosophila melanogaster.</title>
        <authorList>
            <person name="Adams M.D."/>
            <person name="Celniker S.E."/>
            <person name="Holt R.A."/>
            <person name="Evans C.A."/>
            <person name="Gocayne J.D."/>
            <person name="Amanatides P.G."/>
            <person name="Scherer S.E."/>
            <person name="Li P.W."/>
            <person name="Hoskins R.A."/>
            <person name="Galle R.F."/>
            <person name="George R.A."/>
            <person name="Lewis S.E."/>
            <person name="Richards S."/>
            <person name="Ashburner M."/>
            <person name="Henderson S.N."/>
            <person name="Sutton G.G."/>
            <person name="Wortman J.R."/>
            <person name="Yandell M.D."/>
            <person name="Zhang Q."/>
            <person name="Chen L.X."/>
            <person name="Brandon R.C."/>
            <person name="Rogers Y.-H.C."/>
            <person name="Blazej R.G."/>
            <person name="Champe M."/>
            <person name="Pfeiffer B.D."/>
            <person name="Wan K.H."/>
            <person name="Doyle C."/>
            <person name="Baxter E.G."/>
            <person name="Helt G."/>
            <person name="Nelson C.R."/>
            <person name="Miklos G.L.G."/>
            <person name="Abril J.F."/>
            <person name="Agbayani A."/>
            <person name="An H.-J."/>
            <person name="Andrews-Pfannkoch C."/>
            <person name="Baldwin D."/>
            <person name="Ballew R.M."/>
            <person name="Basu A."/>
            <person name="Baxendale J."/>
            <person name="Bayraktaroglu L."/>
            <person name="Beasley E.M."/>
            <person name="Beeson K.Y."/>
            <person name="Benos P.V."/>
            <person name="Berman B.P."/>
            <person name="Bhandari D."/>
            <person name="Bolshakov S."/>
            <person name="Borkova D."/>
            <person name="Botchan M.R."/>
            <person name="Bouck J."/>
            <person name="Brokstein P."/>
            <person name="Brottier P."/>
            <person name="Burtis K.C."/>
            <person name="Busam D.A."/>
            <person name="Butler H."/>
            <person name="Cadieu E."/>
            <person name="Center A."/>
            <person name="Chandra I."/>
            <person name="Cherry J.M."/>
            <person name="Cawley S."/>
            <person name="Dahlke C."/>
            <person name="Davenport L.B."/>
            <person name="Davies P."/>
            <person name="de Pablos B."/>
            <person name="Delcher A."/>
            <person name="Deng Z."/>
            <person name="Mays A.D."/>
            <person name="Dew I."/>
            <person name="Dietz S.M."/>
            <person name="Dodson K."/>
            <person name="Doup L.E."/>
            <person name="Downes M."/>
            <person name="Dugan-Rocha S."/>
            <person name="Dunkov B.C."/>
            <person name="Dunn P."/>
            <person name="Durbin K.J."/>
            <person name="Evangelista C.C."/>
            <person name="Ferraz C."/>
            <person name="Ferriera S."/>
            <person name="Fleischmann W."/>
            <person name="Fosler C."/>
            <person name="Gabrielian A.E."/>
            <person name="Garg N.S."/>
            <person name="Gelbart W.M."/>
            <person name="Glasser K."/>
            <person name="Glodek A."/>
            <person name="Gong F."/>
            <person name="Gorrell J.H."/>
            <person name="Gu Z."/>
            <person name="Guan P."/>
            <person name="Harris M."/>
            <person name="Harris N.L."/>
            <person name="Harvey D.A."/>
            <person name="Heiman T.J."/>
            <person name="Hernandez J.R."/>
            <person name="Houck J."/>
            <person name="Hostin D."/>
            <person name="Houston K.A."/>
            <person name="Howland T.J."/>
            <person name="Wei M.-H."/>
            <person name="Ibegwam C."/>
            <person name="Jalali M."/>
            <person name="Kalush F."/>
            <person name="Karpen G.H."/>
            <person name="Ke Z."/>
            <person name="Kennison J.A."/>
            <person name="Ketchum K.A."/>
            <person name="Kimmel B.E."/>
            <person name="Kodira C.D."/>
            <person name="Kraft C.L."/>
            <person name="Kravitz S."/>
            <person name="Kulp D."/>
            <person name="Lai Z."/>
            <person name="Lasko P."/>
            <person name="Lei Y."/>
            <person name="Levitsky A.A."/>
            <person name="Li J.H."/>
            <person name="Li Z."/>
            <person name="Liang Y."/>
            <person name="Lin X."/>
            <person name="Liu X."/>
            <person name="Mattei B."/>
            <person name="McIntosh T.C."/>
            <person name="McLeod M.P."/>
            <person name="McPherson D."/>
            <person name="Merkulov G."/>
            <person name="Milshina N.V."/>
            <person name="Mobarry C."/>
            <person name="Morris J."/>
            <person name="Moshrefi A."/>
            <person name="Mount S.M."/>
            <person name="Moy M."/>
            <person name="Murphy B."/>
            <person name="Murphy L."/>
            <person name="Muzny D.M."/>
            <person name="Nelson D.L."/>
            <person name="Nelson D.R."/>
            <person name="Nelson K.A."/>
            <person name="Nixon K."/>
            <person name="Nusskern D.R."/>
            <person name="Pacleb J.M."/>
            <person name="Palazzolo M."/>
            <person name="Pittman G.S."/>
            <person name="Pan S."/>
            <person name="Pollard J."/>
            <person name="Puri V."/>
            <person name="Reese M.G."/>
            <person name="Reinert K."/>
            <person name="Remington K."/>
            <person name="Saunders R.D.C."/>
            <person name="Scheeler F."/>
            <person name="Shen H."/>
            <person name="Shue B.C."/>
            <person name="Siden-Kiamos I."/>
            <person name="Simpson M."/>
            <person name="Skupski M.P."/>
            <person name="Smith T.J."/>
            <person name="Spier E."/>
            <person name="Spradling A.C."/>
            <person name="Stapleton M."/>
            <person name="Strong R."/>
            <person name="Sun E."/>
            <person name="Svirskas R."/>
            <person name="Tector C."/>
            <person name="Turner R."/>
            <person name="Venter E."/>
            <person name="Wang A.H."/>
            <person name="Wang X."/>
            <person name="Wang Z.-Y."/>
            <person name="Wassarman D.A."/>
            <person name="Weinstock G.M."/>
            <person name="Weissenbach J."/>
            <person name="Williams S.M."/>
            <person name="Woodage T."/>
            <person name="Worley K.C."/>
            <person name="Wu D."/>
            <person name="Yang S."/>
            <person name="Yao Q.A."/>
            <person name="Ye J."/>
            <person name="Yeh R.-F."/>
            <person name="Zaveri J.S."/>
            <person name="Zhan M."/>
            <person name="Zhang G."/>
            <person name="Zhao Q."/>
            <person name="Zheng L."/>
            <person name="Zheng X.H."/>
            <person name="Zhong F.N."/>
            <person name="Zhong W."/>
            <person name="Zhou X."/>
            <person name="Zhu S.C."/>
            <person name="Zhu X."/>
            <person name="Smith H.O."/>
            <person name="Gibbs R.A."/>
            <person name="Myers E.W."/>
            <person name="Rubin G.M."/>
            <person name="Venter J.C."/>
        </authorList>
    </citation>
    <scope>NUCLEOTIDE SEQUENCE [LARGE SCALE GENOMIC DNA]</scope>
    <source>
        <strain>Berkeley</strain>
    </source>
</reference>
<reference key="2">
    <citation type="journal article" date="2002" name="Genome Biol.">
        <title>Annotation of the Drosophila melanogaster euchromatic genome: a systematic review.</title>
        <authorList>
            <person name="Misra S."/>
            <person name="Crosby M.A."/>
            <person name="Mungall C.J."/>
            <person name="Matthews B.B."/>
            <person name="Campbell K.S."/>
            <person name="Hradecky P."/>
            <person name="Huang Y."/>
            <person name="Kaminker J.S."/>
            <person name="Millburn G.H."/>
            <person name="Prochnik S.E."/>
            <person name="Smith C.D."/>
            <person name="Tupy J.L."/>
            <person name="Whitfield E.J."/>
            <person name="Bayraktaroglu L."/>
            <person name="Berman B.P."/>
            <person name="Bettencourt B.R."/>
            <person name="Celniker S.E."/>
            <person name="de Grey A.D.N.J."/>
            <person name="Drysdale R.A."/>
            <person name="Harris N.L."/>
            <person name="Richter J."/>
            <person name="Russo S."/>
            <person name="Schroeder A.J."/>
            <person name="Shu S.Q."/>
            <person name="Stapleton M."/>
            <person name="Yamada C."/>
            <person name="Ashburner M."/>
            <person name="Gelbart W.M."/>
            <person name="Rubin G.M."/>
            <person name="Lewis S.E."/>
        </authorList>
    </citation>
    <scope>GENOME REANNOTATION</scope>
    <scope>ALTERNATIVE SPLICING</scope>
    <source>
        <strain>Berkeley</strain>
    </source>
</reference>
<reference key="3">
    <citation type="journal article" date="2002" name="Genome Biol.">
        <title>A Drosophila full-length cDNA resource.</title>
        <authorList>
            <person name="Stapleton M."/>
            <person name="Carlson J.W."/>
            <person name="Brokstein P."/>
            <person name="Yu C."/>
            <person name="Champe M."/>
            <person name="George R.A."/>
            <person name="Guarin H."/>
            <person name="Kronmiller B."/>
            <person name="Pacleb J.M."/>
            <person name="Park S."/>
            <person name="Wan K.H."/>
            <person name="Rubin G.M."/>
            <person name="Celniker S.E."/>
        </authorList>
    </citation>
    <scope>NUCLEOTIDE SEQUENCE [LARGE SCALE MRNA] (ISOFORMS A AND B)</scope>
    <source>
        <strain>Berkeley</strain>
        <tissue>Embryo</tissue>
        <tissue>Ovary</tissue>
    </source>
</reference>
<accession>Q9VFB2</accession>
<accession>A8JR11</accession>
<accession>Q8IH25</accession>
<accession>Q8INE7</accession>
<accession>Q8SYL8</accession>
<gene>
    <name type="primary">mRpS10</name>
    <name type="ORF">CG4247</name>
</gene>
<name>RT10_DROME</name>
<dbReference type="EMBL" id="AE014297">
    <property type="protein sequence ID" value="AAF55148.2"/>
    <property type="molecule type" value="Genomic_DNA"/>
</dbReference>
<dbReference type="EMBL" id="AE014297">
    <property type="protein sequence ID" value="AAN13636.2"/>
    <property type="molecule type" value="Genomic_DNA"/>
</dbReference>
<dbReference type="EMBL" id="AY071464">
    <property type="protein sequence ID" value="AAL49086.1"/>
    <property type="molecule type" value="mRNA"/>
</dbReference>
<dbReference type="EMBL" id="BT001464">
    <property type="protein sequence ID" value="AAN71219.1"/>
    <property type="status" value="ALT_INIT"/>
    <property type="molecule type" value="mRNA"/>
</dbReference>
<dbReference type="RefSeq" id="NP_524355.2">
    <molecule id="Q9VFB2-1"/>
    <property type="nucleotide sequence ID" value="NM_079631.4"/>
</dbReference>
<dbReference type="RefSeq" id="NP_731985.2">
    <molecule id="Q9VFB2-2"/>
    <property type="nucleotide sequence ID" value="NM_169624.3"/>
</dbReference>
<dbReference type="SMR" id="Q9VFB2"/>
<dbReference type="BioGRID" id="66902">
    <property type="interactions" value="1"/>
</dbReference>
<dbReference type="FunCoup" id="Q9VFB2">
    <property type="interactions" value="789"/>
</dbReference>
<dbReference type="IntAct" id="Q9VFB2">
    <property type="interactions" value="25"/>
</dbReference>
<dbReference type="STRING" id="7227.FBpp0082513"/>
<dbReference type="PaxDb" id="7227-FBpp0082513"/>
<dbReference type="DNASU" id="41838"/>
<dbReference type="EnsemblMetazoa" id="FBtr0083053">
    <molecule id="Q9VFB2-2"/>
    <property type="protein sequence ID" value="FBpp0082512"/>
    <property type="gene ID" value="FBgn0038307"/>
</dbReference>
<dbReference type="EnsemblMetazoa" id="FBtr0083054">
    <molecule id="Q9VFB2-1"/>
    <property type="protein sequence ID" value="FBpp0082513"/>
    <property type="gene ID" value="FBgn0038307"/>
</dbReference>
<dbReference type="GeneID" id="41838"/>
<dbReference type="KEGG" id="dme:Dmel_CG4247"/>
<dbReference type="UCSC" id="CG4247-RC">
    <property type="organism name" value="d. melanogaster"/>
</dbReference>
<dbReference type="AGR" id="FB:FBgn0038307"/>
<dbReference type="CTD" id="55173"/>
<dbReference type="FlyBase" id="FBgn0038307">
    <property type="gene designation" value="mRpS10"/>
</dbReference>
<dbReference type="VEuPathDB" id="VectorBase:FBgn0038307"/>
<dbReference type="eggNOG" id="KOG3321">
    <property type="taxonomic scope" value="Eukaryota"/>
</dbReference>
<dbReference type="GeneTree" id="ENSGT00390000009045"/>
<dbReference type="InParanoid" id="Q9VFB2"/>
<dbReference type="OMA" id="IRWVQPA"/>
<dbReference type="OrthoDB" id="366214at2759"/>
<dbReference type="PhylomeDB" id="Q9VFB2"/>
<dbReference type="Reactome" id="R-DME-5389840">
    <property type="pathway name" value="Mitochondrial translation elongation"/>
</dbReference>
<dbReference type="Reactome" id="R-DME-5419276">
    <property type="pathway name" value="Mitochondrial translation termination"/>
</dbReference>
<dbReference type="Reactome" id="R-DME-9837999">
    <property type="pathway name" value="Mitochondrial protein degradation"/>
</dbReference>
<dbReference type="BioGRID-ORCS" id="41838">
    <property type="hits" value="1 hit in 1 CRISPR screen"/>
</dbReference>
<dbReference type="GenomeRNAi" id="41838"/>
<dbReference type="PRO" id="PR:Q9VFB2"/>
<dbReference type="Proteomes" id="UP000000803">
    <property type="component" value="Chromosome 3R"/>
</dbReference>
<dbReference type="Bgee" id="FBgn0038307">
    <property type="expression patterns" value="Expressed in adult antennal lobe projection neuron adPN (Drosophila) in brain and 122 other cell types or tissues"/>
</dbReference>
<dbReference type="ExpressionAtlas" id="Q9VFB2">
    <property type="expression patterns" value="baseline and differential"/>
</dbReference>
<dbReference type="GO" id="GO:0005763">
    <property type="term" value="C:mitochondrial small ribosomal subunit"/>
    <property type="evidence" value="ECO:0000250"/>
    <property type="project" value="UniProtKB"/>
</dbReference>
<dbReference type="GO" id="GO:0005739">
    <property type="term" value="C:mitochondrion"/>
    <property type="evidence" value="ECO:0000318"/>
    <property type="project" value="GO_Central"/>
</dbReference>
<dbReference type="GO" id="GO:0003735">
    <property type="term" value="F:structural constituent of ribosome"/>
    <property type="evidence" value="ECO:0000250"/>
    <property type="project" value="FlyBase"/>
</dbReference>
<dbReference type="GO" id="GO:0032543">
    <property type="term" value="P:mitochondrial translation"/>
    <property type="evidence" value="ECO:0000304"/>
    <property type="project" value="FlyBase"/>
</dbReference>
<dbReference type="FunFam" id="3.30.70.600:FF:000005">
    <property type="entry name" value="28S ribosomal protein S10, mitochondrial"/>
    <property type="match status" value="1"/>
</dbReference>
<dbReference type="Gene3D" id="3.30.70.600">
    <property type="entry name" value="Ribosomal protein S10 domain"/>
    <property type="match status" value="1"/>
</dbReference>
<dbReference type="InterPro" id="IPR027486">
    <property type="entry name" value="Ribosomal_uS10_dom"/>
</dbReference>
<dbReference type="InterPro" id="IPR036838">
    <property type="entry name" value="Ribosomal_uS10_dom_sf"/>
</dbReference>
<dbReference type="InterPro" id="IPR040055">
    <property type="entry name" value="Ribosomal_uS10m"/>
</dbReference>
<dbReference type="PANTHER" id="PTHR13334">
    <property type="entry name" value="MITOCHONDRIAL 28S RIBOSOMAL PROTEIN S10"/>
    <property type="match status" value="1"/>
</dbReference>
<dbReference type="PANTHER" id="PTHR13334:SF4">
    <property type="entry name" value="SMALL RIBOSOMAL SUBUNIT PROTEIN US10M"/>
    <property type="match status" value="1"/>
</dbReference>
<dbReference type="Pfam" id="PF00338">
    <property type="entry name" value="Ribosomal_S10"/>
    <property type="match status" value="1"/>
</dbReference>
<dbReference type="SMART" id="SM01403">
    <property type="entry name" value="Ribosomal_S10"/>
    <property type="match status" value="1"/>
</dbReference>
<dbReference type="SUPFAM" id="SSF54999">
    <property type="entry name" value="Ribosomal protein S10"/>
    <property type="match status" value="1"/>
</dbReference>
<keyword id="KW-0025">Alternative splicing</keyword>
<keyword id="KW-0496">Mitochondrion</keyword>
<keyword id="KW-1185">Reference proteome</keyword>
<keyword id="KW-0687">Ribonucleoprotein</keyword>
<keyword id="KW-0689">Ribosomal protein</keyword>
<proteinExistence type="evidence at transcript level"/>
<comment type="subunit">
    <text evidence="1">Component of the mitochondrial ribosome small subunit (28S) which comprises a 12S rRNA and about 30 distinct proteins.</text>
</comment>
<comment type="subcellular location">
    <subcellularLocation>
        <location evidence="1">Mitochondrion</location>
    </subcellularLocation>
</comment>
<comment type="alternative products">
    <event type="alternative splicing"/>
    <isoform>
        <id>Q9VFB2-1</id>
        <name>B</name>
        <sequence type="displayed"/>
    </isoform>
    <isoform>
        <id>Q9VFB2-2</id>
        <name>A</name>
        <name>C</name>
        <sequence type="described" ref="VSP_013575"/>
    </isoform>
</comment>
<comment type="similarity">
    <text evidence="3">Belongs to the universal ribosomal protein uS10 family.</text>
</comment>
<comment type="sequence caution" evidence="3">
    <conflict type="erroneous initiation">
        <sequence resource="EMBL-CDS" id="AAN71219"/>
    </conflict>
    <text>Extended N-terminus.</text>
</comment>
<evidence type="ECO:0000250" key="1">
    <source>
        <dbReference type="UniProtKB" id="P82664"/>
    </source>
</evidence>
<evidence type="ECO:0000303" key="2">
    <source>
    </source>
</evidence>
<evidence type="ECO:0000305" key="3"/>
<organism>
    <name type="scientific">Drosophila melanogaster</name>
    <name type="common">Fruit fly</name>
    <dbReference type="NCBI Taxonomy" id="7227"/>
    <lineage>
        <taxon>Eukaryota</taxon>
        <taxon>Metazoa</taxon>
        <taxon>Ecdysozoa</taxon>
        <taxon>Arthropoda</taxon>
        <taxon>Hexapoda</taxon>
        <taxon>Insecta</taxon>
        <taxon>Pterygota</taxon>
        <taxon>Neoptera</taxon>
        <taxon>Endopterygota</taxon>
        <taxon>Diptera</taxon>
        <taxon>Brachycera</taxon>
        <taxon>Muscomorpha</taxon>
        <taxon>Ephydroidea</taxon>
        <taxon>Drosophilidae</taxon>
        <taxon>Drosophila</taxon>
        <taxon>Sophophora</taxon>
    </lineage>
</organism>
<feature type="chain" id="PRO_0000146682" description="Small ribosomal subunit protein uS10m">
    <location>
        <begin position="1"/>
        <end position="173"/>
    </location>
</feature>
<feature type="splice variant" id="VSP_013575" description="In isoform A." evidence="2">
    <original>MKMHMKHLDLYS</original>
    <variation>ML</variation>
    <location>
        <begin position="1"/>
        <end position="12"/>
    </location>
</feature>